<sequence length="159" mass="18319">MAVQLVLNFIIAVFWLFVTNSYTTNNFVLGFIFGLVLVYLLHRVLPGRFYVITLYRIIKLVIIFLIELIKANFDVLKIIIKPSIKNEPGFFVYHTDLKKDWQIVLLSNLITLTPGTVVLGVSDDRTKIYIHAIDFSTKEQEVESIKTSLEKIVREVGEI</sequence>
<evidence type="ECO:0000250" key="1"/>
<evidence type="ECO:0000255" key="2"/>
<evidence type="ECO:0000305" key="3"/>
<gene>
    <name type="primary">mnhE1</name>
    <name type="ordered locus">SAOUHSC_00885</name>
</gene>
<keyword id="KW-0050">Antiport</keyword>
<keyword id="KW-1003">Cell membrane</keyword>
<keyword id="KW-0375">Hydrogen ion transport</keyword>
<keyword id="KW-0406">Ion transport</keyword>
<keyword id="KW-0472">Membrane</keyword>
<keyword id="KW-1185">Reference proteome</keyword>
<keyword id="KW-0915">Sodium</keyword>
<keyword id="KW-0739">Sodium transport</keyword>
<keyword id="KW-0812">Transmembrane</keyword>
<keyword id="KW-1133">Transmembrane helix</keyword>
<keyword id="KW-0813">Transport</keyword>
<organism>
    <name type="scientific">Staphylococcus aureus (strain NCTC 8325 / PS 47)</name>
    <dbReference type="NCBI Taxonomy" id="93061"/>
    <lineage>
        <taxon>Bacteria</taxon>
        <taxon>Bacillati</taxon>
        <taxon>Bacillota</taxon>
        <taxon>Bacilli</taxon>
        <taxon>Bacillales</taxon>
        <taxon>Staphylococcaceae</taxon>
        <taxon>Staphylococcus</taxon>
    </lineage>
</organism>
<accession>Q2G2H8</accession>
<dbReference type="EMBL" id="CP000253">
    <property type="protein sequence ID" value="ABD30010.1"/>
    <property type="molecule type" value="Genomic_DNA"/>
</dbReference>
<dbReference type="RefSeq" id="WP_000290674.1">
    <property type="nucleotide sequence ID" value="NZ_LS483365.1"/>
</dbReference>
<dbReference type="RefSeq" id="YP_499438.1">
    <property type="nucleotide sequence ID" value="NC_007795.1"/>
</dbReference>
<dbReference type="SMR" id="Q2G2H8"/>
<dbReference type="STRING" id="93061.SAOUHSC_00885"/>
<dbReference type="PaxDb" id="1280-SAXN108_0943"/>
<dbReference type="GeneID" id="3919232"/>
<dbReference type="KEGG" id="sao:SAOUHSC_00885"/>
<dbReference type="PATRIC" id="fig|93061.5.peg.805"/>
<dbReference type="eggNOG" id="COG1863">
    <property type="taxonomic scope" value="Bacteria"/>
</dbReference>
<dbReference type="HOGENOM" id="CLU_086615_3_2_9"/>
<dbReference type="OrthoDB" id="9800498at2"/>
<dbReference type="PRO" id="PR:Q2G2H8"/>
<dbReference type="Proteomes" id="UP000008816">
    <property type="component" value="Chromosome"/>
</dbReference>
<dbReference type="GO" id="GO:0005886">
    <property type="term" value="C:plasma membrane"/>
    <property type="evidence" value="ECO:0007669"/>
    <property type="project" value="UniProtKB-SubCell"/>
</dbReference>
<dbReference type="GO" id="GO:0015385">
    <property type="term" value="F:sodium:proton antiporter activity"/>
    <property type="evidence" value="ECO:0000318"/>
    <property type="project" value="GO_Central"/>
</dbReference>
<dbReference type="GO" id="GO:0035725">
    <property type="term" value="P:sodium ion transmembrane transport"/>
    <property type="evidence" value="ECO:0000318"/>
    <property type="project" value="GO_Central"/>
</dbReference>
<dbReference type="InterPro" id="IPR004847">
    <property type="entry name" value="Antiport_suE1"/>
</dbReference>
<dbReference type="InterPro" id="IPR002758">
    <property type="entry name" value="Cation_antiport_E"/>
</dbReference>
<dbReference type="NCBIfam" id="TIGR00942">
    <property type="entry name" value="2a6301s05"/>
    <property type="match status" value="1"/>
</dbReference>
<dbReference type="NCBIfam" id="NF009291">
    <property type="entry name" value="PRK12651.1-1"/>
    <property type="match status" value="1"/>
</dbReference>
<dbReference type="PANTHER" id="PTHR34584">
    <property type="entry name" value="NA(+)/H(+) ANTIPORTER SUBUNIT E1"/>
    <property type="match status" value="1"/>
</dbReference>
<dbReference type="PANTHER" id="PTHR34584:SF1">
    <property type="entry name" value="NA(+)_H(+) ANTIPORTER SUBUNIT E1"/>
    <property type="match status" value="1"/>
</dbReference>
<dbReference type="Pfam" id="PF01899">
    <property type="entry name" value="MNHE"/>
    <property type="match status" value="1"/>
</dbReference>
<dbReference type="PIRSF" id="PIRSF019239">
    <property type="entry name" value="MrpE"/>
    <property type="match status" value="1"/>
</dbReference>
<proteinExistence type="inferred from homology"/>
<feature type="chain" id="PRO_0000372145" description="Na(+)/H(+) antiporter subunit E1">
    <location>
        <begin position="1"/>
        <end position="159"/>
    </location>
</feature>
<feature type="transmembrane region" description="Helical" evidence="2">
    <location>
        <begin position="1"/>
        <end position="21"/>
    </location>
</feature>
<feature type="transmembrane region" description="Helical" evidence="2">
    <location>
        <begin position="27"/>
        <end position="47"/>
    </location>
</feature>
<feature type="transmembrane region" description="Helical" evidence="2">
    <location>
        <begin position="49"/>
        <end position="69"/>
    </location>
</feature>
<feature type="transmembrane region" description="Helical" evidence="2">
    <location>
        <begin position="101"/>
        <end position="121"/>
    </location>
</feature>
<protein>
    <recommendedName>
        <fullName>Na(+)/H(+) antiporter subunit E1</fullName>
    </recommendedName>
    <alternativeName>
        <fullName>Mnh complex subunit E1</fullName>
    </alternativeName>
</protein>
<comment type="function">
    <text evidence="1">Mnh complex is a Na(+)/H(+) antiporter involved in Na(+) excretion.</text>
</comment>
<comment type="subunit">
    <text evidence="1">May form a heterooligomeric complex that consists of seven subunits: mnhA1, mnhB1, mnhC1, mnhD1, mnhE1, mnhF1 and mnhG1.</text>
</comment>
<comment type="subcellular location">
    <subcellularLocation>
        <location evidence="3">Cell membrane</location>
        <topology evidence="3">Multi-pass membrane protein</topology>
    </subcellularLocation>
</comment>
<comment type="similarity">
    <text evidence="3">Belongs to the CPA3 antiporters (TC 2.A.63) subunit E family.</text>
</comment>
<name>MNHE1_STAA8</name>
<reference key="1">
    <citation type="book" date="2006" name="Gram positive pathogens, 2nd edition">
        <title>The Staphylococcus aureus NCTC 8325 genome.</title>
        <editorList>
            <person name="Fischetti V."/>
            <person name="Novick R."/>
            <person name="Ferretti J."/>
            <person name="Portnoy D."/>
            <person name="Rood J."/>
        </editorList>
        <authorList>
            <person name="Gillaspy A.F."/>
            <person name="Worrell V."/>
            <person name="Orvis J."/>
            <person name="Roe B.A."/>
            <person name="Dyer D.W."/>
            <person name="Iandolo J.J."/>
        </authorList>
    </citation>
    <scope>NUCLEOTIDE SEQUENCE [LARGE SCALE GENOMIC DNA]</scope>
    <source>
        <strain>NCTC 8325 / PS 47</strain>
    </source>
</reference>